<proteinExistence type="inferred from homology"/>
<keyword id="KW-0963">Cytoplasm</keyword>
<keyword id="KW-0489">Methyltransferase</keyword>
<keyword id="KW-1185">Reference proteome</keyword>
<keyword id="KW-0698">rRNA processing</keyword>
<keyword id="KW-0949">S-adenosyl-L-methionine</keyword>
<keyword id="KW-0808">Transferase</keyword>
<evidence type="ECO:0000255" key="1">
    <source>
        <dbReference type="HAMAP-Rule" id="MF_00074"/>
    </source>
</evidence>
<protein>
    <recommendedName>
        <fullName evidence="1">Ribosomal RNA small subunit methyltransferase G</fullName>
        <ecNumber evidence="1">2.1.1.170</ecNumber>
    </recommendedName>
    <alternativeName>
        <fullName evidence="1">16S rRNA 7-methylguanosine methyltransferase</fullName>
        <shortName evidence="1">16S rRNA m7G methyltransferase</shortName>
    </alternativeName>
</protein>
<reference key="1">
    <citation type="submission" date="2007-05" db="EMBL/GenBank/DDBJ databases">
        <title>Complete sequence of chromosome of Acidiphilium cryptum JF-5.</title>
        <authorList>
            <consortium name="US DOE Joint Genome Institute"/>
            <person name="Copeland A."/>
            <person name="Lucas S."/>
            <person name="Lapidus A."/>
            <person name="Barry K."/>
            <person name="Detter J.C."/>
            <person name="Glavina del Rio T."/>
            <person name="Hammon N."/>
            <person name="Israni S."/>
            <person name="Dalin E."/>
            <person name="Tice H."/>
            <person name="Pitluck S."/>
            <person name="Sims D."/>
            <person name="Brettin T."/>
            <person name="Bruce D."/>
            <person name="Han C."/>
            <person name="Schmutz J."/>
            <person name="Larimer F."/>
            <person name="Land M."/>
            <person name="Hauser L."/>
            <person name="Kyrpides N."/>
            <person name="Kim E."/>
            <person name="Magnuson T."/>
            <person name="Richardson P."/>
        </authorList>
    </citation>
    <scope>NUCLEOTIDE SEQUENCE [LARGE SCALE GENOMIC DNA]</scope>
    <source>
        <strain>JF-5</strain>
    </source>
</reference>
<dbReference type="EC" id="2.1.1.170" evidence="1"/>
<dbReference type="EMBL" id="CP000697">
    <property type="protein sequence ID" value="ABQ31599.1"/>
    <property type="molecule type" value="Genomic_DNA"/>
</dbReference>
<dbReference type="RefSeq" id="WP_012040032.1">
    <property type="nucleotide sequence ID" value="NC_009484.1"/>
</dbReference>
<dbReference type="SMR" id="A5G167"/>
<dbReference type="STRING" id="349163.Acry_2405"/>
<dbReference type="KEGG" id="acr:Acry_2405"/>
<dbReference type="eggNOG" id="COG0357">
    <property type="taxonomic scope" value="Bacteria"/>
</dbReference>
<dbReference type="HOGENOM" id="CLU_065341_1_1_5"/>
<dbReference type="Proteomes" id="UP000000245">
    <property type="component" value="Chromosome"/>
</dbReference>
<dbReference type="GO" id="GO:0005829">
    <property type="term" value="C:cytosol"/>
    <property type="evidence" value="ECO:0007669"/>
    <property type="project" value="TreeGrafter"/>
</dbReference>
<dbReference type="GO" id="GO:0070043">
    <property type="term" value="F:rRNA (guanine-N7-)-methyltransferase activity"/>
    <property type="evidence" value="ECO:0007669"/>
    <property type="project" value="UniProtKB-UniRule"/>
</dbReference>
<dbReference type="Gene3D" id="3.40.50.150">
    <property type="entry name" value="Vaccinia Virus protein VP39"/>
    <property type="match status" value="1"/>
</dbReference>
<dbReference type="HAMAP" id="MF_00074">
    <property type="entry name" value="16SrRNA_methyltr_G"/>
    <property type="match status" value="1"/>
</dbReference>
<dbReference type="InterPro" id="IPR003682">
    <property type="entry name" value="rRNA_ssu_MeTfrase_G"/>
</dbReference>
<dbReference type="InterPro" id="IPR029063">
    <property type="entry name" value="SAM-dependent_MTases_sf"/>
</dbReference>
<dbReference type="NCBIfam" id="TIGR00138">
    <property type="entry name" value="rsmG_gidB"/>
    <property type="match status" value="1"/>
</dbReference>
<dbReference type="PANTHER" id="PTHR31760">
    <property type="entry name" value="S-ADENOSYL-L-METHIONINE-DEPENDENT METHYLTRANSFERASES SUPERFAMILY PROTEIN"/>
    <property type="match status" value="1"/>
</dbReference>
<dbReference type="PANTHER" id="PTHR31760:SF0">
    <property type="entry name" value="S-ADENOSYL-L-METHIONINE-DEPENDENT METHYLTRANSFERASES SUPERFAMILY PROTEIN"/>
    <property type="match status" value="1"/>
</dbReference>
<dbReference type="Pfam" id="PF02527">
    <property type="entry name" value="GidB"/>
    <property type="match status" value="1"/>
</dbReference>
<dbReference type="PIRSF" id="PIRSF003078">
    <property type="entry name" value="GidB"/>
    <property type="match status" value="1"/>
</dbReference>
<dbReference type="SUPFAM" id="SSF53335">
    <property type="entry name" value="S-adenosyl-L-methionine-dependent methyltransferases"/>
    <property type="match status" value="1"/>
</dbReference>
<name>RSMG_ACICJ</name>
<comment type="function">
    <text evidence="1">Specifically methylates the N7 position of guanine in position 527 of 16S rRNA.</text>
</comment>
<comment type="catalytic activity">
    <reaction evidence="1">
        <text>guanosine(527) in 16S rRNA + S-adenosyl-L-methionine = N(7)-methylguanosine(527) in 16S rRNA + S-adenosyl-L-homocysteine</text>
        <dbReference type="Rhea" id="RHEA:42732"/>
        <dbReference type="Rhea" id="RHEA-COMP:10209"/>
        <dbReference type="Rhea" id="RHEA-COMP:10210"/>
        <dbReference type="ChEBI" id="CHEBI:57856"/>
        <dbReference type="ChEBI" id="CHEBI:59789"/>
        <dbReference type="ChEBI" id="CHEBI:74269"/>
        <dbReference type="ChEBI" id="CHEBI:74480"/>
        <dbReference type="EC" id="2.1.1.170"/>
    </reaction>
</comment>
<comment type="subcellular location">
    <subcellularLocation>
        <location evidence="1">Cytoplasm</location>
    </subcellularLocation>
</comment>
<comment type="similarity">
    <text evidence="1">Belongs to the methyltransferase superfamily. RNA methyltransferase RsmG family.</text>
</comment>
<feature type="chain" id="PRO_0000335303" description="Ribosomal RNA small subunit methyltransferase G">
    <location>
        <begin position="1"/>
        <end position="217"/>
    </location>
</feature>
<feature type="binding site" evidence="1">
    <location>
        <position position="85"/>
    </location>
    <ligand>
        <name>S-adenosyl-L-methionine</name>
        <dbReference type="ChEBI" id="CHEBI:59789"/>
    </ligand>
</feature>
<feature type="binding site" evidence="1">
    <location>
        <position position="90"/>
    </location>
    <ligand>
        <name>S-adenosyl-L-methionine</name>
        <dbReference type="ChEBI" id="CHEBI:59789"/>
    </ligand>
</feature>
<feature type="binding site" evidence="1">
    <location>
        <begin position="135"/>
        <end position="136"/>
    </location>
    <ligand>
        <name>S-adenosyl-L-methionine</name>
        <dbReference type="ChEBI" id="CHEBI:59789"/>
    </ligand>
</feature>
<feature type="binding site" evidence="1">
    <location>
        <position position="149"/>
    </location>
    <ligand>
        <name>S-adenosyl-L-methionine</name>
        <dbReference type="ChEBI" id="CHEBI:59789"/>
    </ligand>
</feature>
<organism>
    <name type="scientific">Acidiphilium cryptum (strain JF-5)</name>
    <dbReference type="NCBI Taxonomy" id="349163"/>
    <lineage>
        <taxon>Bacteria</taxon>
        <taxon>Pseudomonadati</taxon>
        <taxon>Pseudomonadota</taxon>
        <taxon>Alphaproteobacteria</taxon>
        <taxon>Acetobacterales</taxon>
        <taxon>Acidocellaceae</taxon>
        <taxon>Acidiphilium</taxon>
    </lineage>
</organism>
<sequence length="217" mass="23040">MSGGGGASAGDVSRETRERIEALVSRETLSRLEAFAALILRWTARINLVSRKDAAPAEIWNRHILDSLQMLPLVPQGAFRAADLGSGGGLPGLVLAIARPEIGFTLIESDRRKAAFLQTAIAELKLNATVLPVRIEQARLEPSPLVTARALAALPVLFGYAAPLLAPGGVCLFLKGRGADAELTAAAEGWQMRAERFPSQTDAGAAILRISELRRAA</sequence>
<accession>A5G167</accession>
<gene>
    <name evidence="1" type="primary">rsmG</name>
    <name type="ordered locus">Acry_2405</name>
</gene>